<name>PANC_MYCA1</name>
<feature type="chain" id="PRO_0000305485" description="Pantothenate synthetase">
    <location>
        <begin position="1"/>
        <end position="308"/>
    </location>
</feature>
<feature type="region of interest" description="Disordered" evidence="2">
    <location>
        <begin position="286"/>
        <end position="308"/>
    </location>
</feature>
<feature type="active site" description="Proton donor" evidence="1">
    <location>
        <position position="46"/>
    </location>
</feature>
<feature type="binding site" evidence="1">
    <location>
        <begin position="39"/>
        <end position="46"/>
    </location>
    <ligand>
        <name>ATP</name>
        <dbReference type="ChEBI" id="CHEBI:30616"/>
    </ligand>
</feature>
<feature type="binding site" evidence="1">
    <location>
        <position position="71"/>
    </location>
    <ligand>
        <name>(R)-pantoate</name>
        <dbReference type="ChEBI" id="CHEBI:15980"/>
    </ligand>
</feature>
<feature type="binding site" evidence="1">
    <location>
        <position position="71"/>
    </location>
    <ligand>
        <name>beta-alanine</name>
        <dbReference type="ChEBI" id="CHEBI:57966"/>
    </ligand>
</feature>
<feature type="binding site" evidence="1">
    <location>
        <begin position="157"/>
        <end position="160"/>
    </location>
    <ligand>
        <name>ATP</name>
        <dbReference type="ChEBI" id="CHEBI:30616"/>
    </ligand>
</feature>
<feature type="binding site" evidence="1">
    <location>
        <position position="163"/>
    </location>
    <ligand>
        <name>(R)-pantoate</name>
        <dbReference type="ChEBI" id="CHEBI:15980"/>
    </ligand>
</feature>
<feature type="binding site" evidence="1">
    <location>
        <position position="186"/>
    </location>
    <ligand>
        <name>ATP</name>
        <dbReference type="ChEBI" id="CHEBI:30616"/>
    </ligand>
</feature>
<feature type="binding site" evidence="1">
    <location>
        <begin position="194"/>
        <end position="197"/>
    </location>
    <ligand>
        <name>ATP</name>
        <dbReference type="ChEBI" id="CHEBI:30616"/>
    </ligand>
</feature>
<evidence type="ECO:0000255" key="1">
    <source>
        <dbReference type="HAMAP-Rule" id="MF_00158"/>
    </source>
</evidence>
<evidence type="ECO:0000256" key="2">
    <source>
        <dbReference type="SAM" id="MobiDB-lite"/>
    </source>
</evidence>
<sequence length="308" mass="32767">MKPAFTAGELNTYTSPGDVTAVSRALRHTGRRVMLVPTMGALHDGHLALVRAAKRVPGSVVVVSIFVNPLQFSAGEDLDAYPRTLDDDLALLRSEGVEIAFTPTAAAMYPNGLRTTVQPGPLAAELEGGPRPTHFAGVLTVVCKLLQIVRPDRIFFGEKDYQQLVMIRQMVADLNIDVQVVGVPTVREADGLAMSSRNRYLDATQRELAVTLSAALTAGAHAAHLGGAAALRAARAVLDAVPELTVDYLELRDAGLGPAPAHGSARLLVAARLGNTRLLDNIEMQIETPAGTAGPDGDRQYAQSPWRN</sequence>
<protein>
    <recommendedName>
        <fullName evidence="1">Pantothenate synthetase</fullName>
        <shortName evidence="1">PS</shortName>
        <ecNumber evidence="1">6.3.2.1</ecNumber>
    </recommendedName>
    <alternativeName>
        <fullName evidence="1">Pantoate--beta-alanine ligase</fullName>
    </alternativeName>
    <alternativeName>
        <fullName evidence="1">Pantoate-activating enzyme</fullName>
    </alternativeName>
</protein>
<proteinExistence type="inferred from homology"/>
<organism>
    <name type="scientific">Mycobacterium avium (strain 104)</name>
    <dbReference type="NCBI Taxonomy" id="243243"/>
    <lineage>
        <taxon>Bacteria</taxon>
        <taxon>Bacillati</taxon>
        <taxon>Actinomycetota</taxon>
        <taxon>Actinomycetes</taxon>
        <taxon>Mycobacteriales</taxon>
        <taxon>Mycobacteriaceae</taxon>
        <taxon>Mycobacterium</taxon>
        <taxon>Mycobacterium avium complex (MAC)</taxon>
    </lineage>
</organism>
<gene>
    <name evidence="1" type="primary">panC</name>
    <name type="ordered locus">MAV_0551</name>
</gene>
<keyword id="KW-0067">ATP-binding</keyword>
<keyword id="KW-0963">Cytoplasm</keyword>
<keyword id="KW-0436">Ligase</keyword>
<keyword id="KW-0547">Nucleotide-binding</keyword>
<keyword id="KW-0566">Pantothenate biosynthesis</keyword>
<accession>A0QA93</accession>
<reference key="1">
    <citation type="submission" date="2006-10" db="EMBL/GenBank/DDBJ databases">
        <authorList>
            <person name="Fleischmann R.D."/>
            <person name="Dodson R.J."/>
            <person name="Haft D.H."/>
            <person name="Merkel J.S."/>
            <person name="Nelson W.C."/>
            <person name="Fraser C.M."/>
        </authorList>
    </citation>
    <scope>NUCLEOTIDE SEQUENCE [LARGE SCALE GENOMIC DNA]</scope>
    <source>
        <strain>104</strain>
    </source>
</reference>
<dbReference type="EC" id="6.3.2.1" evidence="1"/>
<dbReference type="EMBL" id="CP000479">
    <property type="protein sequence ID" value="ABK64754.1"/>
    <property type="molecule type" value="Genomic_DNA"/>
</dbReference>
<dbReference type="RefSeq" id="WP_011723636.1">
    <property type="nucleotide sequence ID" value="NC_008595.1"/>
</dbReference>
<dbReference type="SMR" id="A0QA93"/>
<dbReference type="KEGG" id="mav:MAV_0551"/>
<dbReference type="HOGENOM" id="CLU_047148_0_1_11"/>
<dbReference type="UniPathway" id="UPA00028">
    <property type="reaction ID" value="UER00005"/>
</dbReference>
<dbReference type="Proteomes" id="UP000001574">
    <property type="component" value="Chromosome"/>
</dbReference>
<dbReference type="GO" id="GO:0005829">
    <property type="term" value="C:cytosol"/>
    <property type="evidence" value="ECO:0007669"/>
    <property type="project" value="TreeGrafter"/>
</dbReference>
<dbReference type="GO" id="GO:0005524">
    <property type="term" value="F:ATP binding"/>
    <property type="evidence" value="ECO:0007669"/>
    <property type="project" value="UniProtKB-KW"/>
</dbReference>
<dbReference type="GO" id="GO:0004592">
    <property type="term" value="F:pantoate-beta-alanine ligase activity"/>
    <property type="evidence" value="ECO:0007669"/>
    <property type="project" value="UniProtKB-UniRule"/>
</dbReference>
<dbReference type="GO" id="GO:0015940">
    <property type="term" value="P:pantothenate biosynthetic process"/>
    <property type="evidence" value="ECO:0007669"/>
    <property type="project" value="UniProtKB-UniRule"/>
</dbReference>
<dbReference type="CDD" id="cd00560">
    <property type="entry name" value="PanC"/>
    <property type="match status" value="1"/>
</dbReference>
<dbReference type="FunFam" id="3.40.50.620:FF:000114">
    <property type="entry name" value="Pantothenate synthetase"/>
    <property type="match status" value="1"/>
</dbReference>
<dbReference type="Gene3D" id="3.40.50.620">
    <property type="entry name" value="HUPs"/>
    <property type="match status" value="1"/>
</dbReference>
<dbReference type="Gene3D" id="3.30.1300.10">
    <property type="entry name" value="Pantoate-beta-alanine ligase, C-terminal domain"/>
    <property type="match status" value="1"/>
</dbReference>
<dbReference type="HAMAP" id="MF_00158">
    <property type="entry name" value="PanC"/>
    <property type="match status" value="1"/>
</dbReference>
<dbReference type="InterPro" id="IPR003721">
    <property type="entry name" value="Pantoate_ligase"/>
</dbReference>
<dbReference type="InterPro" id="IPR042176">
    <property type="entry name" value="Pantoate_ligase_C"/>
</dbReference>
<dbReference type="InterPro" id="IPR014729">
    <property type="entry name" value="Rossmann-like_a/b/a_fold"/>
</dbReference>
<dbReference type="NCBIfam" id="TIGR00018">
    <property type="entry name" value="panC"/>
    <property type="match status" value="1"/>
</dbReference>
<dbReference type="PANTHER" id="PTHR21299">
    <property type="entry name" value="CYTIDYLATE KINASE/PANTOATE-BETA-ALANINE LIGASE"/>
    <property type="match status" value="1"/>
</dbReference>
<dbReference type="PANTHER" id="PTHR21299:SF1">
    <property type="entry name" value="PANTOATE--BETA-ALANINE LIGASE"/>
    <property type="match status" value="1"/>
</dbReference>
<dbReference type="Pfam" id="PF02569">
    <property type="entry name" value="Pantoate_ligase"/>
    <property type="match status" value="1"/>
</dbReference>
<dbReference type="SUPFAM" id="SSF52374">
    <property type="entry name" value="Nucleotidylyl transferase"/>
    <property type="match status" value="1"/>
</dbReference>
<comment type="function">
    <text evidence="1">Catalyzes the condensation of pantoate with beta-alanine in an ATP-dependent reaction via a pantoyl-adenylate intermediate.</text>
</comment>
<comment type="catalytic activity">
    <reaction evidence="1">
        <text>(R)-pantoate + beta-alanine + ATP = (R)-pantothenate + AMP + diphosphate + H(+)</text>
        <dbReference type="Rhea" id="RHEA:10912"/>
        <dbReference type="ChEBI" id="CHEBI:15378"/>
        <dbReference type="ChEBI" id="CHEBI:15980"/>
        <dbReference type="ChEBI" id="CHEBI:29032"/>
        <dbReference type="ChEBI" id="CHEBI:30616"/>
        <dbReference type="ChEBI" id="CHEBI:33019"/>
        <dbReference type="ChEBI" id="CHEBI:57966"/>
        <dbReference type="ChEBI" id="CHEBI:456215"/>
        <dbReference type="EC" id="6.3.2.1"/>
    </reaction>
</comment>
<comment type="pathway">
    <text evidence="1">Cofactor biosynthesis; (R)-pantothenate biosynthesis; (R)-pantothenate from (R)-pantoate and beta-alanine: step 1/1.</text>
</comment>
<comment type="subunit">
    <text evidence="1">Homodimer.</text>
</comment>
<comment type="subcellular location">
    <subcellularLocation>
        <location evidence="1">Cytoplasm</location>
    </subcellularLocation>
</comment>
<comment type="miscellaneous">
    <text evidence="1">The reaction proceeds by a bi uni uni bi ping pong mechanism.</text>
</comment>
<comment type="similarity">
    <text evidence="1">Belongs to the pantothenate synthetase family.</text>
</comment>